<evidence type="ECO:0000255" key="1">
    <source>
        <dbReference type="HAMAP-Rule" id="MF_01013"/>
    </source>
</evidence>
<comment type="function">
    <text evidence="1">IGPS catalyzes the conversion of PRFAR and glutamine to IGP, AICAR and glutamate. The HisF subunit catalyzes the cyclization activity that produces IGP and AICAR from PRFAR using the ammonia provided by the HisH subunit.</text>
</comment>
<comment type="catalytic activity">
    <reaction evidence="1">
        <text>5-[(5-phospho-1-deoxy-D-ribulos-1-ylimino)methylamino]-1-(5-phospho-beta-D-ribosyl)imidazole-4-carboxamide + L-glutamine = D-erythro-1-(imidazol-4-yl)glycerol 3-phosphate + 5-amino-1-(5-phospho-beta-D-ribosyl)imidazole-4-carboxamide + L-glutamate + H(+)</text>
        <dbReference type="Rhea" id="RHEA:24793"/>
        <dbReference type="ChEBI" id="CHEBI:15378"/>
        <dbReference type="ChEBI" id="CHEBI:29985"/>
        <dbReference type="ChEBI" id="CHEBI:58278"/>
        <dbReference type="ChEBI" id="CHEBI:58359"/>
        <dbReference type="ChEBI" id="CHEBI:58475"/>
        <dbReference type="ChEBI" id="CHEBI:58525"/>
        <dbReference type="EC" id="4.3.2.10"/>
    </reaction>
</comment>
<comment type="pathway">
    <text evidence="1">Amino-acid biosynthesis; L-histidine biosynthesis; L-histidine from 5-phospho-alpha-D-ribose 1-diphosphate: step 5/9.</text>
</comment>
<comment type="subunit">
    <text evidence="1">Heterodimer of HisH and HisF.</text>
</comment>
<comment type="subcellular location">
    <subcellularLocation>
        <location evidence="1">Cytoplasm</location>
    </subcellularLocation>
</comment>
<comment type="similarity">
    <text evidence="1">Belongs to the HisA/HisF family.</text>
</comment>
<reference key="1">
    <citation type="journal article" date="2010" name="PLoS Genet.">
        <title>Genome sequence of the plant growth promoting endophytic bacterium Enterobacter sp. 638.</title>
        <authorList>
            <person name="Taghavi S."/>
            <person name="van der Lelie D."/>
            <person name="Hoffman A."/>
            <person name="Zhang Y.B."/>
            <person name="Walla M.D."/>
            <person name="Vangronsveld J."/>
            <person name="Newman L."/>
            <person name="Monchy S."/>
        </authorList>
    </citation>
    <scope>NUCLEOTIDE SEQUENCE [LARGE SCALE GENOMIC DNA]</scope>
    <source>
        <strain>638</strain>
    </source>
</reference>
<accession>A4WC74</accession>
<feature type="chain" id="PRO_1000063060" description="Imidazole glycerol phosphate synthase subunit HisF">
    <location>
        <begin position="1"/>
        <end position="258"/>
    </location>
</feature>
<feature type="active site" evidence="1">
    <location>
        <position position="11"/>
    </location>
</feature>
<feature type="active site" evidence="1">
    <location>
        <position position="130"/>
    </location>
</feature>
<organism>
    <name type="scientific">Enterobacter sp. (strain 638)</name>
    <dbReference type="NCBI Taxonomy" id="399742"/>
    <lineage>
        <taxon>Bacteria</taxon>
        <taxon>Pseudomonadati</taxon>
        <taxon>Pseudomonadota</taxon>
        <taxon>Gammaproteobacteria</taxon>
        <taxon>Enterobacterales</taxon>
        <taxon>Enterobacteriaceae</taxon>
        <taxon>Enterobacter</taxon>
    </lineage>
</organism>
<proteinExistence type="inferred from homology"/>
<name>HIS6_ENT38</name>
<dbReference type="EC" id="4.3.2.10" evidence="1"/>
<dbReference type="EMBL" id="CP000653">
    <property type="protein sequence ID" value="ABP61304.1"/>
    <property type="molecule type" value="Genomic_DNA"/>
</dbReference>
<dbReference type="RefSeq" id="WP_015959637.1">
    <property type="nucleotide sequence ID" value="NC_009436.1"/>
</dbReference>
<dbReference type="SMR" id="A4WC74"/>
<dbReference type="STRING" id="399742.Ent638_2637"/>
<dbReference type="KEGG" id="ent:Ent638_2637"/>
<dbReference type="eggNOG" id="COG0107">
    <property type="taxonomic scope" value="Bacteria"/>
</dbReference>
<dbReference type="HOGENOM" id="CLU_048577_4_0_6"/>
<dbReference type="OrthoDB" id="9781903at2"/>
<dbReference type="UniPathway" id="UPA00031">
    <property type="reaction ID" value="UER00010"/>
</dbReference>
<dbReference type="Proteomes" id="UP000000230">
    <property type="component" value="Chromosome"/>
</dbReference>
<dbReference type="GO" id="GO:0005737">
    <property type="term" value="C:cytoplasm"/>
    <property type="evidence" value="ECO:0007669"/>
    <property type="project" value="UniProtKB-SubCell"/>
</dbReference>
<dbReference type="GO" id="GO:0000107">
    <property type="term" value="F:imidazoleglycerol-phosphate synthase activity"/>
    <property type="evidence" value="ECO:0007669"/>
    <property type="project" value="UniProtKB-UniRule"/>
</dbReference>
<dbReference type="GO" id="GO:0016829">
    <property type="term" value="F:lyase activity"/>
    <property type="evidence" value="ECO:0007669"/>
    <property type="project" value="UniProtKB-KW"/>
</dbReference>
<dbReference type="GO" id="GO:0000105">
    <property type="term" value="P:L-histidine biosynthetic process"/>
    <property type="evidence" value="ECO:0007669"/>
    <property type="project" value="UniProtKB-UniRule"/>
</dbReference>
<dbReference type="CDD" id="cd04731">
    <property type="entry name" value="HisF"/>
    <property type="match status" value="1"/>
</dbReference>
<dbReference type="FunFam" id="3.20.20.70:FF:000006">
    <property type="entry name" value="Imidazole glycerol phosphate synthase subunit HisF"/>
    <property type="match status" value="1"/>
</dbReference>
<dbReference type="Gene3D" id="3.20.20.70">
    <property type="entry name" value="Aldolase class I"/>
    <property type="match status" value="1"/>
</dbReference>
<dbReference type="HAMAP" id="MF_01013">
    <property type="entry name" value="HisF"/>
    <property type="match status" value="1"/>
</dbReference>
<dbReference type="InterPro" id="IPR013785">
    <property type="entry name" value="Aldolase_TIM"/>
</dbReference>
<dbReference type="InterPro" id="IPR006062">
    <property type="entry name" value="His_biosynth"/>
</dbReference>
<dbReference type="InterPro" id="IPR004651">
    <property type="entry name" value="HisF"/>
</dbReference>
<dbReference type="InterPro" id="IPR050064">
    <property type="entry name" value="IGPS_HisA/HisF"/>
</dbReference>
<dbReference type="InterPro" id="IPR011060">
    <property type="entry name" value="RibuloseP-bd_barrel"/>
</dbReference>
<dbReference type="NCBIfam" id="TIGR00735">
    <property type="entry name" value="hisF"/>
    <property type="match status" value="1"/>
</dbReference>
<dbReference type="PANTHER" id="PTHR21235:SF2">
    <property type="entry name" value="IMIDAZOLE GLYCEROL PHOSPHATE SYNTHASE HISHF"/>
    <property type="match status" value="1"/>
</dbReference>
<dbReference type="PANTHER" id="PTHR21235">
    <property type="entry name" value="IMIDAZOLE GLYCEROL PHOSPHATE SYNTHASE SUBUNIT HISF/H IGP SYNTHASE SUBUNIT HISF/H"/>
    <property type="match status" value="1"/>
</dbReference>
<dbReference type="Pfam" id="PF00977">
    <property type="entry name" value="His_biosynth"/>
    <property type="match status" value="1"/>
</dbReference>
<dbReference type="SUPFAM" id="SSF51366">
    <property type="entry name" value="Ribulose-phoshate binding barrel"/>
    <property type="match status" value="1"/>
</dbReference>
<sequence length="258" mass="28403">MLAKRIIPCLDVRDGQVVKGVQFRNHEIIGDIVPLAKRYAEEGADELVFYDITASSDGRVVDKSWVARVAEVIDIPFCVAGGIKSAEDAAKILSFGADKISINSPALADPELITRLADRFGVQCIVVGIDTWFDDATGKYHVNQYTGDESRTRVTQWETLDWVQEVQKRGAGEIVLNMMNQDGVRNGYDLEQLKKVRAVCRVPMIASGGAGTMEHFLEAFRDADVDGALAASVFHKQIINIGELKTYLATQGVEIRLC</sequence>
<gene>
    <name evidence="1" type="primary">hisF</name>
    <name type="ordered locus">Ent638_2637</name>
</gene>
<protein>
    <recommendedName>
        <fullName evidence="1">Imidazole glycerol phosphate synthase subunit HisF</fullName>
        <ecNumber evidence="1">4.3.2.10</ecNumber>
    </recommendedName>
    <alternativeName>
        <fullName evidence="1">IGP synthase cyclase subunit</fullName>
    </alternativeName>
    <alternativeName>
        <fullName evidence="1">IGP synthase subunit HisF</fullName>
    </alternativeName>
    <alternativeName>
        <fullName evidence="1">ImGP synthase subunit HisF</fullName>
        <shortName evidence="1">IGPS subunit HisF</shortName>
    </alternativeName>
</protein>
<keyword id="KW-0028">Amino-acid biosynthesis</keyword>
<keyword id="KW-0963">Cytoplasm</keyword>
<keyword id="KW-0368">Histidine biosynthesis</keyword>
<keyword id="KW-0456">Lyase</keyword>